<sequence length="132" mass="14190">MAGTFTLRVVSPEGNVLKEEAEFVVLPGGNGEIGILPNHAPLISSIEIGVIRYTVNGKVEKIATSGGFVEVSDNKVTILADTAEPGERVDLDRALAAKERAEKRLTQREGIDVRRAELALMRAVARINAARN</sequence>
<reference key="1">
    <citation type="journal article" date="2012" name="BMC Microbiol.">
        <title>Genome sequence of Desulfitobacterium hafniense DCB-2, a Gram-positive anaerobe capable of dehalogenation and metal reduction.</title>
        <authorList>
            <person name="Kim S.H."/>
            <person name="Harzman C."/>
            <person name="Davis J.K."/>
            <person name="Hutcheson R."/>
            <person name="Broderick J.B."/>
            <person name="Marsh T.L."/>
            <person name="Tiedje J.M."/>
        </authorList>
    </citation>
    <scope>NUCLEOTIDE SEQUENCE [LARGE SCALE GENOMIC DNA]</scope>
    <source>
        <strain>DSM 10664 / DCB-2</strain>
    </source>
</reference>
<comment type="function">
    <text evidence="1">Produces ATP from ADP in the presence of a proton gradient across the membrane.</text>
</comment>
<comment type="subunit">
    <text evidence="1">F-type ATPases have 2 components, CF(1) - the catalytic core - and CF(0) - the membrane proton channel. CF(1) has five subunits: alpha(3), beta(3), gamma(1), delta(1), epsilon(1). CF(0) has three main subunits: a, b and c.</text>
</comment>
<comment type="subcellular location">
    <subcellularLocation>
        <location evidence="1">Cell membrane</location>
        <topology evidence="1">Peripheral membrane protein</topology>
    </subcellularLocation>
</comment>
<comment type="similarity">
    <text evidence="1">Belongs to the ATPase epsilon chain family.</text>
</comment>
<gene>
    <name evidence="1" type="primary">atpC</name>
    <name type="ordered locus">Dhaf_4790</name>
</gene>
<evidence type="ECO:0000255" key="1">
    <source>
        <dbReference type="HAMAP-Rule" id="MF_00530"/>
    </source>
</evidence>
<name>ATPE_DESHD</name>
<protein>
    <recommendedName>
        <fullName evidence="1">ATP synthase epsilon chain</fullName>
    </recommendedName>
    <alternativeName>
        <fullName evidence="1">ATP synthase F1 sector epsilon subunit</fullName>
    </alternativeName>
    <alternativeName>
        <fullName evidence="1">F-ATPase epsilon subunit</fullName>
    </alternativeName>
</protein>
<proteinExistence type="inferred from homology"/>
<dbReference type="EMBL" id="CP001336">
    <property type="protein sequence ID" value="ACL22785.1"/>
    <property type="molecule type" value="Genomic_DNA"/>
</dbReference>
<dbReference type="RefSeq" id="WP_015945466.1">
    <property type="nucleotide sequence ID" value="NC_011830.1"/>
</dbReference>
<dbReference type="SMR" id="B8FZ33"/>
<dbReference type="KEGG" id="dhd:Dhaf_4790"/>
<dbReference type="HOGENOM" id="CLU_084338_1_1_9"/>
<dbReference type="Proteomes" id="UP000007726">
    <property type="component" value="Chromosome"/>
</dbReference>
<dbReference type="GO" id="GO:0005886">
    <property type="term" value="C:plasma membrane"/>
    <property type="evidence" value="ECO:0007669"/>
    <property type="project" value="UniProtKB-SubCell"/>
</dbReference>
<dbReference type="GO" id="GO:0045259">
    <property type="term" value="C:proton-transporting ATP synthase complex"/>
    <property type="evidence" value="ECO:0007669"/>
    <property type="project" value="UniProtKB-KW"/>
</dbReference>
<dbReference type="GO" id="GO:0005524">
    <property type="term" value="F:ATP binding"/>
    <property type="evidence" value="ECO:0007669"/>
    <property type="project" value="UniProtKB-UniRule"/>
</dbReference>
<dbReference type="GO" id="GO:0046933">
    <property type="term" value="F:proton-transporting ATP synthase activity, rotational mechanism"/>
    <property type="evidence" value="ECO:0007669"/>
    <property type="project" value="UniProtKB-UniRule"/>
</dbReference>
<dbReference type="CDD" id="cd12152">
    <property type="entry name" value="F1-ATPase_delta"/>
    <property type="match status" value="1"/>
</dbReference>
<dbReference type="Gene3D" id="1.20.5.440">
    <property type="entry name" value="ATP synthase delta/epsilon subunit, C-terminal domain"/>
    <property type="match status" value="1"/>
</dbReference>
<dbReference type="Gene3D" id="2.60.15.10">
    <property type="entry name" value="F0F1 ATP synthase delta/epsilon subunit, N-terminal"/>
    <property type="match status" value="1"/>
</dbReference>
<dbReference type="HAMAP" id="MF_00530">
    <property type="entry name" value="ATP_synth_epsil_bac"/>
    <property type="match status" value="1"/>
</dbReference>
<dbReference type="InterPro" id="IPR036794">
    <property type="entry name" value="ATP_F1_dsu/esu_C_sf"/>
</dbReference>
<dbReference type="InterPro" id="IPR001469">
    <property type="entry name" value="ATP_synth_F1_dsu/esu"/>
</dbReference>
<dbReference type="InterPro" id="IPR020546">
    <property type="entry name" value="ATP_synth_F1_dsu/esu_N"/>
</dbReference>
<dbReference type="InterPro" id="IPR020547">
    <property type="entry name" value="ATP_synth_F1_esu_C"/>
</dbReference>
<dbReference type="InterPro" id="IPR036771">
    <property type="entry name" value="ATPsynth_dsu/esu_N"/>
</dbReference>
<dbReference type="NCBIfam" id="TIGR01216">
    <property type="entry name" value="ATP_synt_epsi"/>
    <property type="match status" value="1"/>
</dbReference>
<dbReference type="NCBIfam" id="NF001846">
    <property type="entry name" value="PRK00571.1-3"/>
    <property type="match status" value="1"/>
</dbReference>
<dbReference type="NCBIfam" id="NF009980">
    <property type="entry name" value="PRK13446.1"/>
    <property type="match status" value="1"/>
</dbReference>
<dbReference type="PANTHER" id="PTHR13822">
    <property type="entry name" value="ATP SYNTHASE DELTA/EPSILON CHAIN"/>
    <property type="match status" value="1"/>
</dbReference>
<dbReference type="PANTHER" id="PTHR13822:SF10">
    <property type="entry name" value="ATP SYNTHASE EPSILON CHAIN, CHLOROPLASTIC"/>
    <property type="match status" value="1"/>
</dbReference>
<dbReference type="Pfam" id="PF00401">
    <property type="entry name" value="ATP-synt_DE"/>
    <property type="match status" value="1"/>
</dbReference>
<dbReference type="Pfam" id="PF02823">
    <property type="entry name" value="ATP-synt_DE_N"/>
    <property type="match status" value="1"/>
</dbReference>
<dbReference type="SUPFAM" id="SSF46604">
    <property type="entry name" value="Epsilon subunit of F1F0-ATP synthase C-terminal domain"/>
    <property type="match status" value="1"/>
</dbReference>
<dbReference type="SUPFAM" id="SSF51344">
    <property type="entry name" value="Epsilon subunit of F1F0-ATP synthase N-terminal domain"/>
    <property type="match status" value="1"/>
</dbReference>
<feature type="chain" id="PRO_1000146325" description="ATP synthase epsilon chain">
    <location>
        <begin position="1"/>
        <end position="132"/>
    </location>
</feature>
<keyword id="KW-0066">ATP synthesis</keyword>
<keyword id="KW-1003">Cell membrane</keyword>
<keyword id="KW-0139">CF(1)</keyword>
<keyword id="KW-0375">Hydrogen ion transport</keyword>
<keyword id="KW-0406">Ion transport</keyword>
<keyword id="KW-0472">Membrane</keyword>
<keyword id="KW-0813">Transport</keyword>
<accession>B8FZ33</accession>
<organism>
    <name type="scientific">Desulfitobacterium hafniense (strain DSM 10664 / DCB-2)</name>
    <dbReference type="NCBI Taxonomy" id="272564"/>
    <lineage>
        <taxon>Bacteria</taxon>
        <taxon>Bacillati</taxon>
        <taxon>Bacillota</taxon>
        <taxon>Clostridia</taxon>
        <taxon>Eubacteriales</taxon>
        <taxon>Desulfitobacteriaceae</taxon>
        <taxon>Desulfitobacterium</taxon>
    </lineage>
</organism>